<comment type="function">
    <text evidence="1">Involved in protein export. Acts as a chaperone by maintaining the newly synthesized protein in an open conformation. Functions as a peptidyl-prolyl cis-trans isomerase.</text>
</comment>
<comment type="catalytic activity">
    <reaction evidence="1">
        <text>[protein]-peptidylproline (omega=180) = [protein]-peptidylproline (omega=0)</text>
        <dbReference type="Rhea" id="RHEA:16237"/>
        <dbReference type="Rhea" id="RHEA-COMP:10747"/>
        <dbReference type="Rhea" id="RHEA-COMP:10748"/>
        <dbReference type="ChEBI" id="CHEBI:83833"/>
        <dbReference type="ChEBI" id="CHEBI:83834"/>
        <dbReference type="EC" id="5.2.1.8"/>
    </reaction>
</comment>
<comment type="subcellular location">
    <subcellularLocation>
        <location>Cytoplasm</location>
    </subcellularLocation>
    <text evidence="1">About half TF is bound to the ribosome near the polypeptide exit tunnel while the other half is free in the cytoplasm.</text>
</comment>
<comment type="domain">
    <text evidence="1">Consists of 3 domains; the N-terminus binds the ribosome, the middle domain has PPIase activity, while the C-terminus has intrinsic chaperone activity on its own.</text>
</comment>
<comment type="similarity">
    <text evidence="1">Belongs to the FKBP-type PPIase family. Tig subfamily.</text>
</comment>
<dbReference type="EC" id="5.2.1.8" evidence="1"/>
<dbReference type="EMBL" id="CP000153">
    <property type="protein sequence ID" value="ABB45311.1"/>
    <property type="molecule type" value="Genomic_DNA"/>
</dbReference>
<dbReference type="RefSeq" id="WP_011373651.1">
    <property type="nucleotide sequence ID" value="NC_007575.1"/>
</dbReference>
<dbReference type="SMR" id="Q30NX0"/>
<dbReference type="STRING" id="326298.Suden_2037"/>
<dbReference type="KEGG" id="tdn:Suden_2037"/>
<dbReference type="eggNOG" id="COG0544">
    <property type="taxonomic scope" value="Bacteria"/>
</dbReference>
<dbReference type="HOGENOM" id="CLU_033058_2_2_7"/>
<dbReference type="OrthoDB" id="9767721at2"/>
<dbReference type="Proteomes" id="UP000002714">
    <property type="component" value="Chromosome"/>
</dbReference>
<dbReference type="GO" id="GO:0005737">
    <property type="term" value="C:cytoplasm"/>
    <property type="evidence" value="ECO:0007669"/>
    <property type="project" value="UniProtKB-SubCell"/>
</dbReference>
<dbReference type="GO" id="GO:0003755">
    <property type="term" value="F:peptidyl-prolyl cis-trans isomerase activity"/>
    <property type="evidence" value="ECO:0007669"/>
    <property type="project" value="UniProtKB-UniRule"/>
</dbReference>
<dbReference type="GO" id="GO:0051301">
    <property type="term" value="P:cell division"/>
    <property type="evidence" value="ECO:0007669"/>
    <property type="project" value="UniProtKB-KW"/>
</dbReference>
<dbReference type="GO" id="GO:0006457">
    <property type="term" value="P:protein folding"/>
    <property type="evidence" value="ECO:0007669"/>
    <property type="project" value="UniProtKB-UniRule"/>
</dbReference>
<dbReference type="GO" id="GO:0015031">
    <property type="term" value="P:protein transport"/>
    <property type="evidence" value="ECO:0007669"/>
    <property type="project" value="UniProtKB-UniRule"/>
</dbReference>
<dbReference type="FunFam" id="3.10.50.40:FF:000001">
    <property type="entry name" value="Trigger factor"/>
    <property type="match status" value="1"/>
</dbReference>
<dbReference type="Gene3D" id="3.10.50.40">
    <property type="match status" value="1"/>
</dbReference>
<dbReference type="Gene3D" id="3.30.70.1050">
    <property type="entry name" value="Trigger factor ribosome-binding domain"/>
    <property type="match status" value="1"/>
</dbReference>
<dbReference type="Gene3D" id="1.10.3120.10">
    <property type="entry name" value="Trigger factor, C-terminal domain"/>
    <property type="match status" value="1"/>
</dbReference>
<dbReference type="HAMAP" id="MF_00303">
    <property type="entry name" value="Trigger_factor_Tig"/>
    <property type="match status" value="1"/>
</dbReference>
<dbReference type="InterPro" id="IPR046357">
    <property type="entry name" value="PPIase_dom_sf"/>
</dbReference>
<dbReference type="InterPro" id="IPR001179">
    <property type="entry name" value="PPIase_FKBP_dom"/>
</dbReference>
<dbReference type="InterPro" id="IPR005215">
    <property type="entry name" value="Trig_fac"/>
</dbReference>
<dbReference type="InterPro" id="IPR008880">
    <property type="entry name" value="Trigger_fac_C"/>
</dbReference>
<dbReference type="InterPro" id="IPR037041">
    <property type="entry name" value="Trigger_fac_C_sf"/>
</dbReference>
<dbReference type="InterPro" id="IPR008881">
    <property type="entry name" value="Trigger_fac_ribosome-bd_bac"/>
</dbReference>
<dbReference type="InterPro" id="IPR036611">
    <property type="entry name" value="Trigger_fac_ribosome-bd_sf"/>
</dbReference>
<dbReference type="InterPro" id="IPR027304">
    <property type="entry name" value="Trigger_fact/SurA_dom_sf"/>
</dbReference>
<dbReference type="NCBIfam" id="TIGR00115">
    <property type="entry name" value="tig"/>
    <property type="match status" value="1"/>
</dbReference>
<dbReference type="Pfam" id="PF00254">
    <property type="entry name" value="FKBP_C"/>
    <property type="match status" value="1"/>
</dbReference>
<dbReference type="Pfam" id="PF05698">
    <property type="entry name" value="Trigger_C"/>
    <property type="match status" value="1"/>
</dbReference>
<dbReference type="Pfam" id="PF05697">
    <property type="entry name" value="Trigger_N"/>
    <property type="match status" value="1"/>
</dbReference>
<dbReference type="PIRSF" id="PIRSF003095">
    <property type="entry name" value="Trigger_factor"/>
    <property type="match status" value="1"/>
</dbReference>
<dbReference type="SUPFAM" id="SSF54534">
    <property type="entry name" value="FKBP-like"/>
    <property type="match status" value="1"/>
</dbReference>
<dbReference type="SUPFAM" id="SSF109998">
    <property type="entry name" value="Triger factor/SurA peptide-binding domain-like"/>
    <property type="match status" value="1"/>
</dbReference>
<dbReference type="SUPFAM" id="SSF102735">
    <property type="entry name" value="Trigger factor ribosome-binding domain"/>
    <property type="match status" value="1"/>
</dbReference>
<dbReference type="PROSITE" id="PS50059">
    <property type="entry name" value="FKBP_PPIASE"/>
    <property type="match status" value="1"/>
</dbReference>
<gene>
    <name evidence="1" type="primary">tig</name>
    <name type="ordered locus">Suden_2037</name>
</gene>
<reference key="1">
    <citation type="journal article" date="2008" name="Appl. Environ. Microbiol.">
        <title>Genome of the epsilonproteobacterial chemolithoautotroph Sulfurimonas denitrificans.</title>
        <authorList>
            <person name="Sievert S.M."/>
            <person name="Scott K.M."/>
            <person name="Klotz M.G."/>
            <person name="Chain P.S.G."/>
            <person name="Hauser L.J."/>
            <person name="Hemp J."/>
            <person name="Huegler M."/>
            <person name="Land M."/>
            <person name="Lapidus A."/>
            <person name="Larimer F.W."/>
            <person name="Lucas S."/>
            <person name="Malfatti S.A."/>
            <person name="Meyer F."/>
            <person name="Paulsen I.T."/>
            <person name="Ren Q."/>
            <person name="Simon J."/>
            <person name="Bailey K."/>
            <person name="Diaz E."/>
            <person name="Fitzpatrick K.A."/>
            <person name="Glover B."/>
            <person name="Gwatney N."/>
            <person name="Korajkic A."/>
            <person name="Long A."/>
            <person name="Mobberley J.M."/>
            <person name="Pantry S.N."/>
            <person name="Pazder G."/>
            <person name="Peterson S."/>
            <person name="Quintanilla J.D."/>
            <person name="Sprinkle R."/>
            <person name="Stephens J."/>
            <person name="Thomas P."/>
            <person name="Vaughn R."/>
            <person name="Weber M.J."/>
            <person name="Wooten L.L."/>
        </authorList>
    </citation>
    <scope>NUCLEOTIDE SEQUENCE [LARGE SCALE GENOMIC DNA]</scope>
    <source>
        <strain>ATCC 33889 / DSM 1251</strain>
    </source>
</reference>
<protein>
    <recommendedName>
        <fullName evidence="1">Trigger factor</fullName>
        <shortName evidence="1">TF</shortName>
        <ecNumber evidence="1">5.2.1.8</ecNumber>
    </recommendedName>
    <alternativeName>
        <fullName evidence="1">PPIase</fullName>
    </alternativeName>
</protein>
<keyword id="KW-0131">Cell cycle</keyword>
<keyword id="KW-0132">Cell division</keyword>
<keyword id="KW-0143">Chaperone</keyword>
<keyword id="KW-0963">Cytoplasm</keyword>
<keyword id="KW-0413">Isomerase</keyword>
<keyword id="KW-1185">Reference proteome</keyword>
<keyword id="KW-0697">Rotamase</keyword>
<name>TIG_SULDN</name>
<feature type="chain" id="PRO_0000256641" description="Trigger factor">
    <location>
        <begin position="1"/>
        <end position="433"/>
    </location>
</feature>
<feature type="domain" description="PPIase FKBP-type" evidence="1">
    <location>
        <begin position="165"/>
        <end position="250"/>
    </location>
</feature>
<accession>Q30NX0</accession>
<organism>
    <name type="scientific">Sulfurimonas denitrificans (strain ATCC 33889 / DSM 1251)</name>
    <name type="common">Thiomicrospira denitrificans (strain ATCC 33889 / DSM 1251)</name>
    <dbReference type="NCBI Taxonomy" id="326298"/>
    <lineage>
        <taxon>Bacteria</taxon>
        <taxon>Pseudomonadati</taxon>
        <taxon>Campylobacterota</taxon>
        <taxon>Epsilonproteobacteria</taxon>
        <taxon>Campylobacterales</taxon>
        <taxon>Sulfurimonadaceae</taxon>
        <taxon>Sulfurimonas</taxon>
    </lineage>
</organism>
<sequence length="433" mass="48646">MKIKTNKINSANAQIEAEIPRTTIDANIEKIAKNLTKTASVQGFRKGKVPVTVIKKQYGERLIQDAEAEALREVLNKGLDELKVAMSALIGEPNISKFDKSDDKIEVTVKIAMRPEINLENYADMVAPFKKPVISDKEVEDRLEKLADSQGKFVDLKKKRAAKDGDSAIIDFEGSIDGELFEGGAAQEFALVLGSNQFISGFEEQVVGMKIGEEKVIKVTFPESYGSEKLAGKDAEFKVTLHNIQEKVKVEIDEAFAAKMLAGQDDKSLENLRAQIKLQLENEALAKLYNEELKSALLETYVEKINFDLPEFVVEQEIDVSLNRKASTMSEDEIKELRENADKLQELRETFRLDAQKSVKATFIIDALATKEKVRVDENEVMQTIYYEAMQMGQDPRLAYDKYKNAGYLPAIQMSMVEDKVLTQILNSKIKEA</sequence>
<proteinExistence type="inferred from homology"/>
<evidence type="ECO:0000255" key="1">
    <source>
        <dbReference type="HAMAP-Rule" id="MF_00303"/>
    </source>
</evidence>